<proteinExistence type="evidence at protein level"/>
<sequence length="225" mass="24871">MSFIDPRTYIPSNSTESQILKFTFIVCVPICVILIVLLVLYIMRRNSNTNVDWSSLGGFVPTNNNLSTAELGLSKDIREMLPIVIYKESFTVNDTQCSVCLGDYQAEEKLQQMPSCGHTFHMECIDLWLTSHTTCPLCRLSLIPKPSVDLSHQSIEIVSSIENTNGGEASTQPDSQSATEAIIHIDDVEEGNRDSIEVVKESEENDRNSVGTSDGCCSCRLGEKA</sequence>
<gene>
    <name type="primary">ATL59</name>
    <name type="ordered locus">At4g10160</name>
    <name type="ORF">F28M11.80</name>
    <name type="ORF">T9A4.20</name>
</gene>
<accession>Q9SN27</accession>
<accession>Q4TU18</accession>
<keyword id="KW-0472">Membrane</keyword>
<keyword id="KW-0479">Metal-binding</keyword>
<keyword id="KW-1185">Reference proteome</keyword>
<keyword id="KW-0808">Transferase</keyword>
<keyword id="KW-0812">Transmembrane</keyword>
<keyword id="KW-1133">Transmembrane helix</keyword>
<keyword id="KW-0833">Ubl conjugation pathway</keyword>
<keyword id="KW-0862">Zinc</keyword>
<keyword id="KW-0863">Zinc-finger</keyword>
<reference key="1">
    <citation type="journal article" date="2005" name="Plant Physiol.">
        <title>Functional analysis of the RING-type ubiquitin ligase family of Arabidopsis.</title>
        <authorList>
            <person name="Stone S.L."/>
            <person name="Hauksdottir H."/>
            <person name="Troy A."/>
            <person name="Herschleb J."/>
            <person name="Kraft E."/>
            <person name="Callis J."/>
        </authorList>
    </citation>
    <scope>NUCLEOTIDE SEQUENCE [MRNA]</scope>
    <scope>FUNCTION</scope>
    <scope>CATALYTIC ACTIVITY</scope>
    <source>
        <strain>cv. Columbia</strain>
        <tissue>Leaf</tissue>
    </source>
</reference>
<reference key="2">
    <citation type="journal article" date="1999" name="Nature">
        <title>Sequence and analysis of chromosome 4 of the plant Arabidopsis thaliana.</title>
        <authorList>
            <person name="Mayer K.F.X."/>
            <person name="Schueller C."/>
            <person name="Wambutt R."/>
            <person name="Murphy G."/>
            <person name="Volckaert G."/>
            <person name="Pohl T."/>
            <person name="Duesterhoeft A."/>
            <person name="Stiekema W."/>
            <person name="Entian K.-D."/>
            <person name="Terryn N."/>
            <person name="Harris B."/>
            <person name="Ansorge W."/>
            <person name="Brandt P."/>
            <person name="Grivell L.A."/>
            <person name="Rieger M."/>
            <person name="Weichselgartner M."/>
            <person name="de Simone V."/>
            <person name="Obermaier B."/>
            <person name="Mache R."/>
            <person name="Mueller M."/>
            <person name="Kreis M."/>
            <person name="Delseny M."/>
            <person name="Puigdomenech P."/>
            <person name="Watson M."/>
            <person name="Schmidtheini T."/>
            <person name="Reichert B."/>
            <person name="Portetelle D."/>
            <person name="Perez-Alonso M."/>
            <person name="Boutry M."/>
            <person name="Bancroft I."/>
            <person name="Vos P."/>
            <person name="Hoheisel J."/>
            <person name="Zimmermann W."/>
            <person name="Wedler H."/>
            <person name="Ridley P."/>
            <person name="Langham S.-A."/>
            <person name="McCullagh B."/>
            <person name="Bilham L."/>
            <person name="Robben J."/>
            <person name="van der Schueren J."/>
            <person name="Grymonprez B."/>
            <person name="Chuang Y.-J."/>
            <person name="Vandenbussche F."/>
            <person name="Braeken M."/>
            <person name="Weltjens I."/>
            <person name="Voet M."/>
            <person name="Bastiaens I."/>
            <person name="Aert R."/>
            <person name="Defoor E."/>
            <person name="Weitzenegger T."/>
            <person name="Bothe G."/>
            <person name="Ramsperger U."/>
            <person name="Hilbert H."/>
            <person name="Braun M."/>
            <person name="Holzer E."/>
            <person name="Brandt A."/>
            <person name="Peters S."/>
            <person name="van Staveren M."/>
            <person name="Dirkse W."/>
            <person name="Mooijman P."/>
            <person name="Klein Lankhorst R."/>
            <person name="Rose M."/>
            <person name="Hauf J."/>
            <person name="Koetter P."/>
            <person name="Berneiser S."/>
            <person name="Hempel S."/>
            <person name="Feldpausch M."/>
            <person name="Lamberth S."/>
            <person name="Van den Daele H."/>
            <person name="De Keyser A."/>
            <person name="Buysshaert C."/>
            <person name="Gielen J."/>
            <person name="Villarroel R."/>
            <person name="De Clercq R."/>
            <person name="van Montagu M."/>
            <person name="Rogers J."/>
            <person name="Cronin A."/>
            <person name="Quail M.A."/>
            <person name="Bray-Allen S."/>
            <person name="Clark L."/>
            <person name="Doggett J."/>
            <person name="Hall S."/>
            <person name="Kay M."/>
            <person name="Lennard N."/>
            <person name="McLay K."/>
            <person name="Mayes R."/>
            <person name="Pettett A."/>
            <person name="Rajandream M.A."/>
            <person name="Lyne M."/>
            <person name="Benes V."/>
            <person name="Rechmann S."/>
            <person name="Borkova D."/>
            <person name="Bloecker H."/>
            <person name="Scharfe M."/>
            <person name="Grimm M."/>
            <person name="Loehnert T.-H."/>
            <person name="Dose S."/>
            <person name="de Haan M."/>
            <person name="Maarse A.C."/>
            <person name="Schaefer M."/>
            <person name="Mueller-Auer S."/>
            <person name="Gabel C."/>
            <person name="Fuchs M."/>
            <person name="Fartmann B."/>
            <person name="Granderath K."/>
            <person name="Dauner D."/>
            <person name="Herzl A."/>
            <person name="Neumann S."/>
            <person name="Argiriou A."/>
            <person name="Vitale D."/>
            <person name="Liguori R."/>
            <person name="Piravandi E."/>
            <person name="Massenet O."/>
            <person name="Quigley F."/>
            <person name="Clabauld G."/>
            <person name="Muendlein A."/>
            <person name="Felber R."/>
            <person name="Schnabl S."/>
            <person name="Hiller R."/>
            <person name="Schmidt W."/>
            <person name="Lecharny A."/>
            <person name="Aubourg S."/>
            <person name="Chefdor F."/>
            <person name="Cooke R."/>
            <person name="Berger C."/>
            <person name="Monfort A."/>
            <person name="Casacuberta E."/>
            <person name="Gibbons T."/>
            <person name="Weber N."/>
            <person name="Vandenbol M."/>
            <person name="Bargues M."/>
            <person name="Terol J."/>
            <person name="Torres A."/>
            <person name="Perez-Perez A."/>
            <person name="Purnelle B."/>
            <person name="Bent E."/>
            <person name="Johnson S."/>
            <person name="Tacon D."/>
            <person name="Jesse T."/>
            <person name="Heijnen L."/>
            <person name="Schwarz S."/>
            <person name="Scholler P."/>
            <person name="Heber S."/>
            <person name="Francs P."/>
            <person name="Bielke C."/>
            <person name="Frishman D."/>
            <person name="Haase D."/>
            <person name="Lemcke K."/>
            <person name="Mewes H.-W."/>
            <person name="Stocker S."/>
            <person name="Zaccaria P."/>
            <person name="Bevan M."/>
            <person name="Wilson R.K."/>
            <person name="de la Bastide M."/>
            <person name="Habermann K."/>
            <person name="Parnell L."/>
            <person name="Dedhia N."/>
            <person name="Gnoj L."/>
            <person name="Schutz K."/>
            <person name="Huang E."/>
            <person name="Spiegel L."/>
            <person name="Sekhon M."/>
            <person name="Murray J."/>
            <person name="Sheet P."/>
            <person name="Cordes M."/>
            <person name="Abu-Threideh J."/>
            <person name="Stoneking T."/>
            <person name="Kalicki J."/>
            <person name="Graves T."/>
            <person name="Harmon G."/>
            <person name="Edwards J."/>
            <person name="Latreille P."/>
            <person name="Courtney L."/>
            <person name="Cloud J."/>
            <person name="Abbott A."/>
            <person name="Scott K."/>
            <person name="Johnson D."/>
            <person name="Minx P."/>
            <person name="Bentley D."/>
            <person name="Fulton B."/>
            <person name="Miller N."/>
            <person name="Greco T."/>
            <person name="Kemp K."/>
            <person name="Kramer J."/>
            <person name="Fulton L."/>
            <person name="Mardis E."/>
            <person name="Dante M."/>
            <person name="Pepin K."/>
            <person name="Hillier L.W."/>
            <person name="Nelson J."/>
            <person name="Spieth J."/>
            <person name="Ryan E."/>
            <person name="Andrews S."/>
            <person name="Geisel C."/>
            <person name="Layman D."/>
            <person name="Du H."/>
            <person name="Ali J."/>
            <person name="Berghoff A."/>
            <person name="Jones K."/>
            <person name="Drone K."/>
            <person name="Cotton M."/>
            <person name="Joshu C."/>
            <person name="Antonoiu B."/>
            <person name="Zidanic M."/>
            <person name="Strong C."/>
            <person name="Sun H."/>
            <person name="Lamar B."/>
            <person name="Yordan C."/>
            <person name="Ma P."/>
            <person name="Zhong J."/>
            <person name="Preston R."/>
            <person name="Vil D."/>
            <person name="Shekher M."/>
            <person name="Matero A."/>
            <person name="Shah R."/>
            <person name="Swaby I.K."/>
            <person name="O'Shaughnessy A."/>
            <person name="Rodriguez M."/>
            <person name="Hoffman J."/>
            <person name="Till S."/>
            <person name="Granat S."/>
            <person name="Shohdy N."/>
            <person name="Hasegawa A."/>
            <person name="Hameed A."/>
            <person name="Lodhi M."/>
            <person name="Johnson A."/>
            <person name="Chen E."/>
            <person name="Marra M.A."/>
            <person name="Martienssen R."/>
            <person name="McCombie W.R."/>
        </authorList>
    </citation>
    <scope>NUCLEOTIDE SEQUENCE [LARGE SCALE GENOMIC DNA]</scope>
    <source>
        <strain>cv. Columbia</strain>
    </source>
</reference>
<reference key="3">
    <citation type="journal article" date="2017" name="Plant J.">
        <title>Araport11: a complete reannotation of the Arabidopsis thaliana reference genome.</title>
        <authorList>
            <person name="Cheng C.Y."/>
            <person name="Krishnakumar V."/>
            <person name="Chan A.P."/>
            <person name="Thibaud-Nissen F."/>
            <person name="Schobel S."/>
            <person name="Town C.D."/>
        </authorList>
    </citation>
    <scope>GENOME REANNOTATION</scope>
    <source>
        <strain>cv. Columbia</strain>
    </source>
</reference>
<reference key="4">
    <citation type="journal article" date="2003" name="Science">
        <title>Empirical analysis of transcriptional activity in the Arabidopsis genome.</title>
        <authorList>
            <person name="Yamada K."/>
            <person name="Lim J."/>
            <person name="Dale J.M."/>
            <person name="Chen H."/>
            <person name="Shinn P."/>
            <person name="Palm C.J."/>
            <person name="Southwick A.M."/>
            <person name="Wu H.C."/>
            <person name="Kim C.J."/>
            <person name="Nguyen M."/>
            <person name="Pham P.K."/>
            <person name="Cheuk R.F."/>
            <person name="Karlin-Newmann G."/>
            <person name="Liu S.X."/>
            <person name="Lam B."/>
            <person name="Sakano H."/>
            <person name="Wu T."/>
            <person name="Yu G."/>
            <person name="Miranda M."/>
            <person name="Quach H.L."/>
            <person name="Tripp M."/>
            <person name="Chang C.H."/>
            <person name="Lee J.M."/>
            <person name="Toriumi M.J."/>
            <person name="Chan M.M."/>
            <person name="Tang C.C."/>
            <person name="Onodera C.S."/>
            <person name="Deng J.M."/>
            <person name="Akiyama K."/>
            <person name="Ansari Y."/>
            <person name="Arakawa T."/>
            <person name="Banh J."/>
            <person name="Banno F."/>
            <person name="Bowser L."/>
            <person name="Brooks S.Y."/>
            <person name="Carninci P."/>
            <person name="Chao Q."/>
            <person name="Choy N."/>
            <person name="Enju A."/>
            <person name="Goldsmith A.D."/>
            <person name="Gurjal M."/>
            <person name="Hansen N.F."/>
            <person name="Hayashizaki Y."/>
            <person name="Johnson-Hopson C."/>
            <person name="Hsuan V.W."/>
            <person name="Iida K."/>
            <person name="Karnes M."/>
            <person name="Khan S."/>
            <person name="Koesema E."/>
            <person name="Ishida J."/>
            <person name="Jiang P.X."/>
            <person name="Jones T."/>
            <person name="Kawai J."/>
            <person name="Kamiya A."/>
            <person name="Meyers C."/>
            <person name="Nakajima M."/>
            <person name="Narusaka M."/>
            <person name="Seki M."/>
            <person name="Sakurai T."/>
            <person name="Satou M."/>
            <person name="Tamse R."/>
            <person name="Vaysberg M."/>
            <person name="Wallender E.K."/>
            <person name="Wong C."/>
            <person name="Yamamura Y."/>
            <person name="Yuan S."/>
            <person name="Shinozaki K."/>
            <person name="Davis R.W."/>
            <person name="Theologis A."/>
            <person name="Ecker J.R."/>
        </authorList>
    </citation>
    <scope>NUCLEOTIDE SEQUENCE [LARGE SCALE MRNA]</scope>
    <source>
        <strain>cv. Columbia</strain>
    </source>
</reference>
<reference key="5">
    <citation type="journal article" date="2002" name="Genome Biol.">
        <title>Evaluation and classification of RING-finger domains encoded by the Arabidopsis genome.</title>
        <authorList>
            <person name="Kosarev P."/>
            <person name="Mayer K.F.X."/>
            <person name="Hardtke C.S."/>
        </authorList>
    </citation>
    <scope>GENE FAMILY ORGANIZATION</scope>
</reference>
<reference key="6">
    <citation type="journal article" date="2005" name="Plant Physiol.">
        <title>Genome analysis and functional characterization of the E2 and RING-type E3 ligase ubiquitination enzymes of Arabidopsis.</title>
        <authorList>
            <person name="Kraft E."/>
            <person name="Stone S.L."/>
            <person name="Ma L."/>
            <person name="Su N."/>
            <person name="Gao Y."/>
            <person name="Lau O.-S."/>
            <person name="Deng X.-W."/>
            <person name="Callis J."/>
        </authorList>
    </citation>
    <scope>FUNCTION</scope>
    <scope>CATALYTIC ACTIVITY</scope>
</reference>
<reference key="7">
    <citation type="journal article" date="2006" name="J. Mol. Evol.">
        <title>The ATL gene family from Arabidopsis thaliana and Oryza sativa comprises a large number of putative ubiquitin ligases of the RING-H2 type.</title>
        <authorList>
            <person name="Serrano M."/>
            <person name="Parra S."/>
            <person name="Alcaraz L.D."/>
            <person name="Guzman P."/>
        </authorList>
    </citation>
    <scope>NOMENCLATURE</scope>
    <scope>GENE FAMILY ORGANIZATION</scope>
</reference>
<name>ATL59_ARATH</name>
<protein>
    <recommendedName>
        <fullName>E3 ubiquitin-protein ligase ATL59</fullName>
        <ecNumber evidence="4 5">2.3.2.27</ecNumber>
    </recommendedName>
    <alternativeName>
        <fullName>RING-H2 finger protein ATL59</fullName>
    </alternativeName>
    <alternativeName>
        <fullName evidence="6">RING-type E3 ubiquitin transferase ATL59</fullName>
    </alternativeName>
</protein>
<feature type="chain" id="PRO_0000055800" description="E3 ubiquitin-protein ligase ATL59">
    <location>
        <begin position="1"/>
        <end position="225"/>
    </location>
</feature>
<feature type="transmembrane region" description="Helical" evidence="2">
    <location>
        <begin position="22"/>
        <end position="42"/>
    </location>
</feature>
<feature type="zinc finger region" description="RING-type; atypical" evidence="3">
    <location>
        <begin position="97"/>
        <end position="139"/>
    </location>
</feature>
<evidence type="ECO:0000250" key="1"/>
<evidence type="ECO:0000255" key="2"/>
<evidence type="ECO:0000255" key="3">
    <source>
        <dbReference type="PROSITE-ProRule" id="PRU00175"/>
    </source>
</evidence>
<evidence type="ECO:0000269" key="4">
    <source>
    </source>
</evidence>
<evidence type="ECO:0000269" key="5">
    <source>
    </source>
</evidence>
<evidence type="ECO:0000305" key="6"/>
<organism>
    <name type="scientific">Arabidopsis thaliana</name>
    <name type="common">Mouse-ear cress</name>
    <dbReference type="NCBI Taxonomy" id="3702"/>
    <lineage>
        <taxon>Eukaryota</taxon>
        <taxon>Viridiplantae</taxon>
        <taxon>Streptophyta</taxon>
        <taxon>Embryophyta</taxon>
        <taxon>Tracheophyta</taxon>
        <taxon>Spermatophyta</taxon>
        <taxon>Magnoliopsida</taxon>
        <taxon>eudicotyledons</taxon>
        <taxon>Gunneridae</taxon>
        <taxon>Pentapetalae</taxon>
        <taxon>rosids</taxon>
        <taxon>malvids</taxon>
        <taxon>Brassicales</taxon>
        <taxon>Brassicaceae</taxon>
        <taxon>Camelineae</taxon>
        <taxon>Arabidopsis</taxon>
    </lineage>
</organism>
<dbReference type="EC" id="2.3.2.27" evidence="4 5"/>
<dbReference type="EMBL" id="DQ059118">
    <property type="protein sequence ID" value="AAY57604.1"/>
    <property type="molecule type" value="mRNA"/>
</dbReference>
<dbReference type="EMBL" id="AF096373">
    <property type="status" value="NOT_ANNOTATED_CDS"/>
    <property type="molecule type" value="Genomic_DNA"/>
</dbReference>
<dbReference type="EMBL" id="AL049487">
    <property type="protein sequence ID" value="CAB39768.1"/>
    <property type="molecule type" value="Genomic_DNA"/>
</dbReference>
<dbReference type="EMBL" id="AL161516">
    <property type="protein sequence ID" value="CAB78139.1"/>
    <property type="molecule type" value="Genomic_DNA"/>
</dbReference>
<dbReference type="EMBL" id="CP002687">
    <property type="protein sequence ID" value="AEE82849.1"/>
    <property type="molecule type" value="Genomic_DNA"/>
</dbReference>
<dbReference type="EMBL" id="AY122915">
    <property type="protein sequence ID" value="AAM67448.1"/>
    <property type="molecule type" value="mRNA"/>
</dbReference>
<dbReference type="PIR" id="T04066">
    <property type="entry name" value="T04066"/>
</dbReference>
<dbReference type="RefSeq" id="NP_192754.1">
    <property type="nucleotide sequence ID" value="NM_117084.3"/>
</dbReference>
<dbReference type="SMR" id="Q9SN27"/>
<dbReference type="BioGRID" id="11906">
    <property type="interactions" value="1"/>
</dbReference>
<dbReference type="IntAct" id="Q9SN27">
    <property type="interactions" value="1"/>
</dbReference>
<dbReference type="STRING" id="3702.Q9SN27"/>
<dbReference type="PaxDb" id="3702-AT4G10160.1"/>
<dbReference type="EnsemblPlants" id="AT4G10160.1">
    <property type="protein sequence ID" value="AT4G10160.1"/>
    <property type="gene ID" value="AT4G10160"/>
</dbReference>
<dbReference type="GeneID" id="826607"/>
<dbReference type="Gramene" id="AT4G10160.1">
    <property type="protein sequence ID" value="AT4G10160.1"/>
    <property type="gene ID" value="AT4G10160"/>
</dbReference>
<dbReference type="KEGG" id="ath:AT4G10160"/>
<dbReference type="Araport" id="AT4G10160"/>
<dbReference type="TAIR" id="AT4G10160">
    <property type="gene designation" value="ATL59"/>
</dbReference>
<dbReference type="eggNOG" id="KOG0800">
    <property type="taxonomic scope" value="Eukaryota"/>
</dbReference>
<dbReference type="HOGENOM" id="CLU_078082_0_0_1"/>
<dbReference type="InParanoid" id="Q9SN27"/>
<dbReference type="PhylomeDB" id="Q9SN27"/>
<dbReference type="UniPathway" id="UPA00143"/>
<dbReference type="PRO" id="PR:Q9SN27"/>
<dbReference type="Proteomes" id="UP000006548">
    <property type="component" value="Chromosome 4"/>
</dbReference>
<dbReference type="ExpressionAtlas" id="Q9SN27">
    <property type="expression patterns" value="baseline and differential"/>
</dbReference>
<dbReference type="GO" id="GO:0016020">
    <property type="term" value="C:membrane"/>
    <property type="evidence" value="ECO:0007669"/>
    <property type="project" value="UniProtKB-SubCell"/>
</dbReference>
<dbReference type="GO" id="GO:0004842">
    <property type="term" value="F:ubiquitin-protein transferase activity"/>
    <property type="evidence" value="ECO:0000314"/>
    <property type="project" value="UniProtKB"/>
</dbReference>
<dbReference type="GO" id="GO:0008270">
    <property type="term" value="F:zinc ion binding"/>
    <property type="evidence" value="ECO:0007669"/>
    <property type="project" value="UniProtKB-KW"/>
</dbReference>
<dbReference type="GO" id="GO:0016567">
    <property type="term" value="P:protein ubiquitination"/>
    <property type="evidence" value="ECO:0000314"/>
    <property type="project" value="UniProtKB"/>
</dbReference>
<dbReference type="CDD" id="cd16461">
    <property type="entry name" value="RING-H2_EL5-like"/>
    <property type="match status" value="1"/>
</dbReference>
<dbReference type="FunFam" id="3.30.40.10:FF:000503">
    <property type="entry name" value="RING-H2 finger protein ATL7"/>
    <property type="match status" value="1"/>
</dbReference>
<dbReference type="Gene3D" id="3.30.40.10">
    <property type="entry name" value="Zinc/RING finger domain, C3HC4 (zinc finger)"/>
    <property type="match status" value="1"/>
</dbReference>
<dbReference type="InterPro" id="IPR053070">
    <property type="entry name" value="RING-type_E3_ubiquitin-ligase"/>
</dbReference>
<dbReference type="InterPro" id="IPR001841">
    <property type="entry name" value="Znf_RING"/>
</dbReference>
<dbReference type="InterPro" id="IPR013083">
    <property type="entry name" value="Znf_RING/FYVE/PHD"/>
</dbReference>
<dbReference type="PANTHER" id="PTHR47035">
    <property type="entry name" value="OS11G0150450 PROTEIN"/>
    <property type="match status" value="1"/>
</dbReference>
<dbReference type="PANTHER" id="PTHR47035:SF3">
    <property type="entry name" value="OS11G0150450 PROTEIN"/>
    <property type="match status" value="1"/>
</dbReference>
<dbReference type="Pfam" id="PF13639">
    <property type="entry name" value="zf-RING_2"/>
    <property type="match status" value="1"/>
</dbReference>
<dbReference type="SMART" id="SM00184">
    <property type="entry name" value="RING"/>
    <property type="match status" value="1"/>
</dbReference>
<dbReference type="SUPFAM" id="SSF57850">
    <property type="entry name" value="RING/U-box"/>
    <property type="match status" value="1"/>
</dbReference>
<dbReference type="PROSITE" id="PS50089">
    <property type="entry name" value="ZF_RING_2"/>
    <property type="match status" value="1"/>
</dbReference>
<comment type="function">
    <text evidence="4 5">E3 ubiquitin-protein ligase able to catalyze polyubiquitination with ubiquitin-conjugating enzyme E2 UBC8, UBC10, UBC11, and UBC34 in vitro.</text>
</comment>
<comment type="catalytic activity">
    <reaction evidence="4 5">
        <text>S-ubiquitinyl-[E2 ubiquitin-conjugating enzyme]-L-cysteine + [acceptor protein]-L-lysine = [E2 ubiquitin-conjugating enzyme]-L-cysteine + N(6)-ubiquitinyl-[acceptor protein]-L-lysine.</text>
        <dbReference type="EC" id="2.3.2.27"/>
    </reaction>
</comment>
<comment type="pathway">
    <text>Protein modification; protein ubiquitination.</text>
</comment>
<comment type="subcellular location">
    <subcellularLocation>
        <location evidence="6">Membrane</location>
        <topology evidence="6">Single-pass membrane protein</topology>
    </subcellularLocation>
</comment>
<comment type="domain">
    <text evidence="1">The RING-type zinc finger domain mediates binding to an E2 ubiquitin-conjugating enzyme.</text>
</comment>
<comment type="similarity">
    <text evidence="6">Belongs to the RING-type zinc finger family. ATL subfamily.</text>
</comment>